<protein>
    <recommendedName>
        <fullName evidence="9">Peroxisome biogenesis protein 20</fullName>
    </recommendedName>
    <alternativeName>
        <fullName evidence="10">Peroxin-20</fullName>
        <shortName evidence="8">Pppex20</shortName>
    </alternativeName>
</protein>
<gene>
    <name evidence="8" type="primary">PEX20</name>
</gene>
<organism>
    <name type="scientific">Komagataella pastoris</name>
    <name type="common">Yeast</name>
    <name type="synonym">Pichia pastoris</name>
    <dbReference type="NCBI Taxonomy" id="4922"/>
    <lineage>
        <taxon>Eukaryota</taxon>
        <taxon>Fungi</taxon>
        <taxon>Dikarya</taxon>
        <taxon>Ascomycota</taxon>
        <taxon>Saccharomycotina</taxon>
        <taxon>Pichiomycetes</taxon>
        <taxon>Pichiales</taxon>
        <taxon>Pichiaceae</taxon>
        <taxon>Komagataella</taxon>
    </lineage>
</organism>
<comment type="function">
    <text evidence="3 4 5 6 7">Coreceptor required for the peroxisomal import of proteins containing a C-terminal PTS2-type peroxisomal targeting signal, such as 3-oxoacyl-CoA thiolase (PubMed:16390998, PubMed:17209040, PubMed:23344950). Acts via its interaction with PEX7, promoting association between PEX7 bound to cargo proteins and the PEX13-PEX14 docking complex (PubMed:16390998). PEX20 along with PEX7 and PTS2-containing cargo proteins are tranlocated into peroxisomes by passing through the PEX13-PEX14 docking complex (PubMed:17209040, PubMed:23344950). PEX20 coreceptor is then retrotranslocated into the cytosol, leading to release of bound cargo in the peroxisome matrix, and reset for a subsequent peroxisome import cycle (PubMed:17209040, PubMed:23344950). Also mediates peroxisomal import of proteins that do not contain PTS1- or PTS2-type peroxisomal targeting signals, such as acyl-CoA oxidases (Aox) izozymes (By similarity). Import of acyl-CoA oxidases (Aox) izozymes is independent of PEX7 (By similarity). Required for PEX7 ubiquitination (PubMed:25009284).</text>
</comment>
<comment type="subunit">
    <text evidence="4 7">Interacts (via WxxxF/Y and LVxEF motifs) with PEX14; promoting translocation through the PEX13-PEX14 docking complex (PubMed:16390998). Interacts with PEX7 (PubMed:16390998, PubMed:25009284).</text>
</comment>
<comment type="subcellular location">
    <subcellularLocation>
        <location evidence="4 5 6">Cytoplasm</location>
        <location evidence="4 5 6">Cytosol</location>
    </subcellularLocation>
    <subcellularLocation>
        <location evidence="4 5 6">Peroxisome matrix</location>
    </subcellularLocation>
    <text evidence="2 4 5 6">Cycles between the cytosol and the peroxisome matrix (PubMed:16390998, PubMed:17209040, PubMed:23344950). Following binding to cargo proteins in the cytosol, recruited to the docking complex, composed of PEX13 and PEX14, leading to translocation into the peroxisome matrix along with cargo proteins (PubMed:16390998). Export and recycling to the cytosol is initiated by binding to the PEX2-PEX10-PEX12 retrotranslocation channel (PubMed:16390998). Cys-8 of PEX20 is then monoubiquitinated by PEX2, promoting its extraction from peroxisomal membrane by the PEX1-PEX6 AAA ATPase complex (PubMed:23344950). Extraction is accompanied by release of bound cargo in the peroxisome matrix (By similarity).</text>
</comment>
<comment type="domain">
    <text evidence="3">The WxxxF/Y motifs mediate interaction with PEX14, promoting association with the PEX13-PEX14 docking complex.</text>
</comment>
<comment type="PTM">
    <text evidence="4 6">Monoubiquitinated at Cys-8 by PEX2 during PEX20 passage through the PEX2-PEX10-PEX12 retrotranslocation channel: monoubiquitination acts as a signal for PEX20 extraction and is required for proper export from peroxisomes and recycling (PubMed:23344950). When PEX5 recycling is compromised, polyubiquitinated at Lys-19 by PEX10 during its passage through the retrotranslocation channel, leading to its degradation (PubMed:16390998).</text>
</comment>
<comment type="disruption phenotype">
    <text evidence="4">Cells are unable to grow on solid media with oleate as a carbon source.</text>
</comment>
<comment type="similarity">
    <text evidence="9">Belongs to the peroxisomal targeting signal receptor family.</text>
</comment>
<feature type="chain" id="PRO_0000456994" description="Peroxisome biogenesis protein 20">
    <location>
        <begin position="1"/>
        <end position="323"/>
    </location>
</feature>
<feature type="short sequence motif" description="WxxxF/Y motif 1" evidence="1">
    <location>
        <begin position="89"/>
        <end position="93"/>
    </location>
</feature>
<feature type="short sequence motif" description="WxxxF/Y motif 2" evidence="1">
    <location>
        <begin position="102"/>
        <end position="105"/>
    </location>
</feature>
<feature type="short sequence motif" description="WxxxF/Y motif 3" evidence="1">
    <location>
        <begin position="141"/>
        <end position="145"/>
    </location>
</feature>
<feature type="cross-link" description="Glycyl cysteine thioester (Cys-Gly) (interchain with G-Cter in ubiquitin)" evidence="6">
    <location>
        <position position="8"/>
    </location>
</feature>
<feature type="cross-link" description="Glycyl lysine isopeptide (Lys-Gly) (interchain with G-Cter in ubiquitin)" evidence="4 5 6">
    <location>
        <position position="19"/>
    </location>
</feature>
<feature type="mutagenesis site" description="Constitutively polyubiquitinated at K-19, leading to its degradation, because of its inability to retrotranslocate into the cytosol. Stable but non-functional protein that cannot recycle to the cytosol; when associated with R-19." evidence="5 6 7">
    <original>C</original>
    <variation>S</variation>
    <location>
        <position position="8"/>
    </location>
</feature>
<feature type="mutagenesis site" description="Abolished polyubiquitination, leading to ccumulation of PEX20 in peroxisome remnants. Stable but non-functional protein that cannot recycle to the cytosol; when associated with S-8." evidence="4 5 6 7">
    <original>K</original>
    <variation>R</variation>
    <location>
        <position position="19"/>
    </location>
</feature>
<feature type="mutagenesis site" description="Abolished interaction with PEX7." evidence="7">
    <original>S</original>
    <variation>F</variation>
    <location>
        <position position="280"/>
    </location>
</feature>
<sequence>MFTSNGSCGPATALDNLSKRVGQDRTLENDHVARFRDQNSSQNRAFRAESSFNTTAGAEFGQFQNTSVQRNYFPSAELIRKNTRFGDNWSSEFRQQQENNKWVEDFGAMNLENVRMEQEQSFQTMDQRTNMQAMSSTANAWTQEFNHMQHNKEMEYEMRIRETQRLVNAPAREVFSMVNQHSQQHNQNFTHNQTQLGDQSHYMTNLAFERQFETVQNEIDGMDMFSDSEQVEQQKELQKEDDNNDIETTKFAEIAQQVFNQMNNVDTTVSQNTEHKFKQSNFLRLMDKVAQREVEINGSGDRFIDKTGNDIRDYLPDPLSDLR</sequence>
<dbReference type="EMBL" id="AY768943">
    <property type="protein sequence ID" value="AAX11696.1"/>
    <property type="molecule type" value="Genomic_DNA"/>
</dbReference>
<dbReference type="iPTMnet" id="Q2VUH8"/>
<dbReference type="GO" id="GO:0005829">
    <property type="term" value="C:cytosol"/>
    <property type="evidence" value="ECO:0000314"/>
    <property type="project" value="UniProtKB"/>
</dbReference>
<dbReference type="GO" id="GO:0005782">
    <property type="term" value="C:peroxisomal matrix"/>
    <property type="evidence" value="ECO:0000314"/>
    <property type="project" value="UniProtKB"/>
</dbReference>
<dbReference type="GO" id="GO:0140597">
    <property type="term" value="F:protein carrier chaperone"/>
    <property type="evidence" value="ECO:0000314"/>
    <property type="project" value="UniProtKB"/>
</dbReference>
<dbReference type="GO" id="GO:0016558">
    <property type="term" value="P:protein import into peroxisome matrix"/>
    <property type="evidence" value="ECO:0000314"/>
    <property type="project" value="UniProtKB"/>
</dbReference>
<dbReference type="GO" id="GO:0016562">
    <property type="term" value="P:protein import into peroxisome matrix, receptor recycling"/>
    <property type="evidence" value="ECO:0000314"/>
    <property type="project" value="UniProtKB"/>
</dbReference>
<dbReference type="Gene3D" id="6.10.280.230">
    <property type="match status" value="1"/>
</dbReference>
<evidence type="ECO:0000250" key="1">
    <source>
        <dbReference type="UniProtKB" id="A0A1L8FDW4"/>
    </source>
</evidence>
<evidence type="ECO:0000250" key="2">
    <source>
        <dbReference type="UniProtKB" id="P50542"/>
    </source>
</evidence>
<evidence type="ECO:0000250" key="3">
    <source>
        <dbReference type="UniProtKB" id="Q6C6R8"/>
    </source>
</evidence>
<evidence type="ECO:0000269" key="4">
    <source>
    </source>
</evidence>
<evidence type="ECO:0000269" key="5">
    <source>
    </source>
</evidence>
<evidence type="ECO:0000269" key="6">
    <source>
    </source>
</evidence>
<evidence type="ECO:0000269" key="7">
    <source>
    </source>
</evidence>
<evidence type="ECO:0000303" key="8">
    <source>
    </source>
</evidence>
<evidence type="ECO:0000305" key="9"/>
<evidence type="ECO:0000312" key="10">
    <source>
        <dbReference type="EMBL" id="AAX11696.1"/>
    </source>
</evidence>
<accession>Q2VUH8</accession>
<reference key="1">
    <citation type="journal article" date="2006" name="J. Cell Biol.">
        <title>Dynamics of the peroxisomal import cycle of PpPex20p: ubiquitin-dependent localization and regulation.</title>
        <authorList>
            <person name="Leon S."/>
            <person name="Zhang L."/>
            <person name="McDonald W.H."/>
            <person name="Yates J. III"/>
            <person name="Cregg J.M."/>
            <person name="Subramani S."/>
        </authorList>
    </citation>
    <scope>NUCLEOTIDE SEQUENCE [GENOMIC DNA]</scope>
    <scope>FUNCTION</scope>
    <scope>SUBCELLULAR LOCATION</scope>
    <scope>INTERACTION WITH PEX7 AND PEX14</scope>
    <scope>DISRUPTION PHENOTYPE</scope>
    <scope>UBIQUITINATION AT LYS-19</scope>
    <scope>MUTAGENESIS OF LYS-19</scope>
</reference>
<reference key="2">
    <citation type="journal article" date="2007" name="J. Biol. Chem.">
        <title>A conserved cysteine residue of Pichia pastoris Pex20p is essential for its recycling from the peroxisome to the cytosol.</title>
        <authorList>
            <person name="Leon S."/>
            <person name="Subramani S."/>
        </authorList>
    </citation>
    <scope>FUNCTION</scope>
    <scope>SUBCELLULAR LOCATION</scope>
    <scope>UBIQUITINATION AT LYS-19</scope>
    <scope>MUTAGENESIS OF CYS-8 AND LYS-19</scope>
</reference>
<reference key="3">
    <citation type="journal article" date="2013" name="J. Biol. Chem.">
        <title>Unique requirements for mono- and polyubiquitination of the peroxisomal targeting signal co-receptor, Pex20.</title>
        <authorList>
            <person name="Liu X."/>
            <person name="Subramani S."/>
        </authorList>
    </citation>
    <scope>FUNCTION</scope>
    <scope>SUBCELLULAR LOCATION</scope>
    <scope>UBIQUITINATION AT CYS-8 AND LYS-19</scope>
    <scope>MUTAGENESIS OF CYS-8 AND LYS-19</scope>
</reference>
<reference key="4">
    <citation type="journal article" date="2014" name="Mol. Biol. Cell">
        <title>The unique degradation pathway of the PTS2 receptor, Pex7, is dependent on the PTS receptor/coreceptor, Pex5 and Pex20.</title>
        <authorList>
            <person name="Hagstrom D."/>
            <person name="Ma C."/>
            <person name="Guha-Polley S."/>
            <person name="Subramani S."/>
        </authorList>
    </citation>
    <scope>FUNCTION</scope>
    <scope>INTERACTION WITH PEX7</scope>
    <scope>MUTAGENESIS OF CYS-8; LYS-19 AND SER-280</scope>
</reference>
<keyword id="KW-0963">Cytoplasm</keyword>
<keyword id="KW-1017">Isopeptide bond</keyword>
<keyword id="KW-0576">Peroxisome</keyword>
<keyword id="KW-0653">Protein transport</keyword>
<keyword id="KW-0677">Repeat</keyword>
<keyword id="KW-0882">Thioester bond</keyword>
<keyword id="KW-0811">Translocation</keyword>
<keyword id="KW-0813">Transport</keyword>
<keyword id="KW-0832">Ubl conjugation</keyword>
<name>PEX20_PICPA</name>
<proteinExistence type="evidence at protein level"/>